<feature type="chain" id="PRO_1000203992" description="Inner membrane-spanning protein YciB">
    <location>
        <begin position="1"/>
        <end position="179"/>
    </location>
</feature>
<feature type="transmembrane region" description="Helical" evidence="1">
    <location>
        <begin position="24"/>
        <end position="44"/>
    </location>
</feature>
<feature type="transmembrane region" description="Helical" evidence="1">
    <location>
        <begin position="49"/>
        <end position="69"/>
    </location>
</feature>
<feature type="transmembrane region" description="Helical" evidence="1">
    <location>
        <begin position="76"/>
        <end position="96"/>
    </location>
</feature>
<feature type="transmembrane region" description="Helical" evidence="1">
    <location>
        <begin position="121"/>
        <end position="141"/>
    </location>
</feature>
<feature type="transmembrane region" description="Helical" evidence="1">
    <location>
        <begin position="151"/>
        <end position="171"/>
    </location>
</feature>
<evidence type="ECO:0000255" key="1">
    <source>
        <dbReference type="HAMAP-Rule" id="MF_00189"/>
    </source>
</evidence>
<comment type="function">
    <text evidence="1">Plays a role in cell envelope biogenesis, maintenance of cell envelope integrity and membrane homeostasis.</text>
</comment>
<comment type="subcellular location">
    <subcellularLocation>
        <location evidence="1">Cell inner membrane</location>
        <topology evidence="1">Multi-pass membrane protein</topology>
    </subcellularLocation>
</comment>
<comment type="similarity">
    <text evidence="1">Belongs to the YciB family.</text>
</comment>
<proteinExistence type="inferred from homology"/>
<accession>C5CNT0</accession>
<organism>
    <name type="scientific">Variovorax paradoxus (strain S110)</name>
    <dbReference type="NCBI Taxonomy" id="543728"/>
    <lineage>
        <taxon>Bacteria</taxon>
        <taxon>Pseudomonadati</taxon>
        <taxon>Pseudomonadota</taxon>
        <taxon>Betaproteobacteria</taxon>
        <taxon>Burkholderiales</taxon>
        <taxon>Comamonadaceae</taxon>
        <taxon>Variovorax</taxon>
    </lineage>
</organism>
<name>YCIB_VARPS</name>
<dbReference type="EMBL" id="CP001635">
    <property type="protein sequence ID" value="ACS19557.1"/>
    <property type="molecule type" value="Genomic_DNA"/>
</dbReference>
<dbReference type="STRING" id="543728.Vapar_2937"/>
<dbReference type="KEGG" id="vap:Vapar_2937"/>
<dbReference type="eggNOG" id="COG2917">
    <property type="taxonomic scope" value="Bacteria"/>
</dbReference>
<dbReference type="HOGENOM" id="CLU_089554_2_0_4"/>
<dbReference type="OrthoDB" id="9788219at2"/>
<dbReference type="GO" id="GO:0005886">
    <property type="term" value="C:plasma membrane"/>
    <property type="evidence" value="ECO:0007669"/>
    <property type="project" value="UniProtKB-SubCell"/>
</dbReference>
<dbReference type="HAMAP" id="MF_00189">
    <property type="entry name" value="YciB"/>
    <property type="match status" value="1"/>
</dbReference>
<dbReference type="InterPro" id="IPR006008">
    <property type="entry name" value="YciB"/>
</dbReference>
<dbReference type="NCBIfam" id="TIGR00997">
    <property type="entry name" value="ispZ"/>
    <property type="match status" value="1"/>
</dbReference>
<dbReference type="NCBIfam" id="NF001325">
    <property type="entry name" value="PRK00259.1-3"/>
    <property type="match status" value="1"/>
</dbReference>
<dbReference type="PANTHER" id="PTHR36917:SF1">
    <property type="entry name" value="INNER MEMBRANE-SPANNING PROTEIN YCIB"/>
    <property type="match status" value="1"/>
</dbReference>
<dbReference type="PANTHER" id="PTHR36917">
    <property type="entry name" value="INTRACELLULAR SEPTATION PROTEIN A-RELATED"/>
    <property type="match status" value="1"/>
</dbReference>
<dbReference type="Pfam" id="PF04279">
    <property type="entry name" value="IspA"/>
    <property type="match status" value="1"/>
</dbReference>
<keyword id="KW-0997">Cell inner membrane</keyword>
<keyword id="KW-1003">Cell membrane</keyword>
<keyword id="KW-0472">Membrane</keyword>
<keyword id="KW-0812">Transmembrane</keyword>
<keyword id="KW-1133">Transmembrane helix</keyword>
<gene>
    <name evidence="1" type="primary">yciB</name>
    <name type="ordered locus">Vapar_2937</name>
</gene>
<sequence length="179" mass="20277">MKLILDFFPILLFFGAYKLADIYTATGVLMAATVLQMGIIYAMERKLQAMQKATLVLILLFGTLTLVLHDDRFIKWKPTVLYGAMAIALAVALWALKKNFLKMLLGSQLQLPDRIWGRLNVAWIGYCLFMAAINGYVAAYFTTEAWVNFKLWGYVFPIVFLVAQGLYISPHLKNDEPSV</sequence>
<reference key="1">
    <citation type="journal article" date="2011" name="J. Bacteriol.">
        <title>Complete genome sequence of the metabolically versatile plant growth-promoting endophyte, Variovorax paradoxus S110.</title>
        <authorList>
            <person name="Han J.I."/>
            <person name="Choi H.K."/>
            <person name="Lee S.W."/>
            <person name="Orwin P.M."/>
            <person name="Kim J."/>
            <person name="Laroe S.L."/>
            <person name="Kim T.G."/>
            <person name="O'Neil J."/>
            <person name="Leadbetter J.R."/>
            <person name="Lee S.Y."/>
            <person name="Hur C.G."/>
            <person name="Spain J.C."/>
            <person name="Ovchinnikova G."/>
            <person name="Goodwin L."/>
            <person name="Han C."/>
        </authorList>
    </citation>
    <scope>NUCLEOTIDE SEQUENCE [LARGE SCALE GENOMIC DNA]</scope>
    <source>
        <strain>S110</strain>
    </source>
</reference>
<protein>
    <recommendedName>
        <fullName evidence="1">Inner membrane-spanning protein YciB</fullName>
    </recommendedName>
</protein>